<name>GMHA_CHLPD</name>
<proteinExistence type="inferred from homology"/>
<feature type="chain" id="PRO_1000009057" description="Phosphoheptose isomerase">
    <location>
        <begin position="1"/>
        <end position="226"/>
    </location>
</feature>
<feature type="domain" description="SIS" evidence="1">
    <location>
        <begin position="50"/>
        <end position="212"/>
    </location>
</feature>
<feature type="binding site" evidence="1">
    <location>
        <begin position="65"/>
        <end position="67"/>
    </location>
    <ligand>
        <name>substrate</name>
    </ligand>
</feature>
<feature type="binding site" evidence="1">
    <location>
        <position position="74"/>
    </location>
    <ligand>
        <name>Zn(2+)</name>
        <dbReference type="ChEBI" id="CHEBI:29105"/>
    </ligand>
</feature>
<feature type="binding site" evidence="1">
    <location>
        <position position="78"/>
    </location>
    <ligand>
        <name>substrate</name>
    </ligand>
</feature>
<feature type="binding site" evidence="1">
    <location>
        <position position="78"/>
    </location>
    <ligand>
        <name>Zn(2+)</name>
        <dbReference type="ChEBI" id="CHEBI:29105"/>
    </ligand>
</feature>
<feature type="binding site" evidence="1">
    <location>
        <begin position="109"/>
        <end position="110"/>
    </location>
    <ligand>
        <name>substrate</name>
    </ligand>
</feature>
<feature type="binding site" evidence="1">
    <location>
        <begin position="135"/>
        <end position="137"/>
    </location>
    <ligand>
        <name>substrate</name>
    </ligand>
</feature>
<feature type="binding site" evidence="1">
    <location>
        <position position="140"/>
    </location>
    <ligand>
        <name>substrate</name>
    </ligand>
</feature>
<feature type="binding site" evidence="1">
    <location>
        <position position="188"/>
    </location>
    <ligand>
        <name>substrate</name>
    </ligand>
</feature>
<feature type="binding site" evidence="1">
    <location>
        <position position="188"/>
    </location>
    <ligand>
        <name>Zn(2+)</name>
        <dbReference type="ChEBI" id="CHEBI:29105"/>
    </ligand>
</feature>
<feature type="binding site" evidence="1">
    <location>
        <position position="196"/>
    </location>
    <ligand>
        <name>Zn(2+)</name>
        <dbReference type="ChEBI" id="CHEBI:29105"/>
    </ligand>
</feature>
<keyword id="KW-0119">Carbohydrate metabolism</keyword>
<keyword id="KW-0963">Cytoplasm</keyword>
<keyword id="KW-0413">Isomerase</keyword>
<keyword id="KW-0479">Metal-binding</keyword>
<keyword id="KW-1185">Reference proteome</keyword>
<keyword id="KW-0862">Zinc</keyword>
<organism>
    <name type="scientific">Chlorobium phaeobacteroides (strain DSM 266 / SMG 266 / 2430)</name>
    <dbReference type="NCBI Taxonomy" id="290317"/>
    <lineage>
        <taxon>Bacteria</taxon>
        <taxon>Pseudomonadati</taxon>
        <taxon>Chlorobiota</taxon>
        <taxon>Chlorobiia</taxon>
        <taxon>Chlorobiales</taxon>
        <taxon>Chlorobiaceae</taxon>
        <taxon>Chlorobium/Pelodictyon group</taxon>
        <taxon>Chlorobium</taxon>
    </lineage>
</organism>
<evidence type="ECO:0000255" key="1">
    <source>
        <dbReference type="HAMAP-Rule" id="MF_00067"/>
    </source>
</evidence>
<protein>
    <recommendedName>
        <fullName evidence="1">Phosphoheptose isomerase</fullName>
        <ecNumber evidence="1">5.3.1.28</ecNumber>
    </recommendedName>
    <alternativeName>
        <fullName evidence="1">Sedoheptulose 7-phosphate isomerase</fullName>
    </alternativeName>
</protein>
<reference key="1">
    <citation type="submission" date="2006-12" db="EMBL/GenBank/DDBJ databases">
        <title>Complete sequence of Chlorobium phaeobacteroides DSM 266.</title>
        <authorList>
            <consortium name="US DOE Joint Genome Institute"/>
            <person name="Copeland A."/>
            <person name="Lucas S."/>
            <person name="Lapidus A."/>
            <person name="Barry K."/>
            <person name="Detter J.C."/>
            <person name="Glavina del Rio T."/>
            <person name="Hammon N."/>
            <person name="Israni S."/>
            <person name="Pitluck S."/>
            <person name="Goltsman E."/>
            <person name="Schmutz J."/>
            <person name="Larimer F."/>
            <person name="Land M."/>
            <person name="Hauser L."/>
            <person name="Mikhailova N."/>
            <person name="Li T."/>
            <person name="Overmann J."/>
            <person name="Bryant D.A."/>
            <person name="Richardson P."/>
        </authorList>
    </citation>
    <scope>NUCLEOTIDE SEQUENCE [LARGE SCALE GENOMIC DNA]</scope>
    <source>
        <strain>DSM 266 / SMG 266 / 2430</strain>
    </source>
</reference>
<sequence>MRRKSGCSAGLDDRSAYEEVVLDSMLYSARLKETVARGNSAVVVAMARLIAGVFETGGKLLICGNGGSAADAQHLATEFTIRYRSSVHRPALPAIALTTDSSALTAGANDLGYDEVFRRLVEAYGRPGDLLLGLSTSGNSRSVVHALDYARKHGMRTLALLGGDGGALKGLADLSVVVPHNGSADRVQECHITLGHVIIDLVERMMGYGTECNNQQNEQGYADQTD</sequence>
<dbReference type="EC" id="5.3.1.28" evidence="1"/>
<dbReference type="EMBL" id="CP000492">
    <property type="protein sequence ID" value="ABL66537.1"/>
    <property type="molecule type" value="Genomic_DNA"/>
</dbReference>
<dbReference type="RefSeq" id="WP_011746314.1">
    <property type="nucleotide sequence ID" value="NC_008639.1"/>
</dbReference>
<dbReference type="SMR" id="A1BJG0"/>
<dbReference type="STRING" id="290317.Cpha266_2549"/>
<dbReference type="KEGG" id="cph:Cpha266_2549"/>
<dbReference type="eggNOG" id="COG0279">
    <property type="taxonomic scope" value="Bacteria"/>
</dbReference>
<dbReference type="HOGENOM" id="CLU_080999_3_0_10"/>
<dbReference type="OrthoDB" id="9781311at2"/>
<dbReference type="UniPathway" id="UPA00041">
    <property type="reaction ID" value="UER00436"/>
</dbReference>
<dbReference type="Proteomes" id="UP000008701">
    <property type="component" value="Chromosome"/>
</dbReference>
<dbReference type="GO" id="GO:0005737">
    <property type="term" value="C:cytoplasm"/>
    <property type="evidence" value="ECO:0007669"/>
    <property type="project" value="UniProtKB-SubCell"/>
</dbReference>
<dbReference type="GO" id="GO:0097367">
    <property type="term" value="F:carbohydrate derivative binding"/>
    <property type="evidence" value="ECO:0007669"/>
    <property type="project" value="InterPro"/>
</dbReference>
<dbReference type="GO" id="GO:0008968">
    <property type="term" value="F:D-sedoheptulose 7-phosphate isomerase activity"/>
    <property type="evidence" value="ECO:0007669"/>
    <property type="project" value="UniProtKB-UniRule"/>
</dbReference>
<dbReference type="GO" id="GO:0008270">
    <property type="term" value="F:zinc ion binding"/>
    <property type="evidence" value="ECO:0007669"/>
    <property type="project" value="UniProtKB-UniRule"/>
</dbReference>
<dbReference type="GO" id="GO:0005975">
    <property type="term" value="P:carbohydrate metabolic process"/>
    <property type="evidence" value="ECO:0007669"/>
    <property type="project" value="UniProtKB-UniRule"/>
</dbReference>
<dbReference type="GO" id="GO:2001061">
    <property type="term" value="P:D-glycero-D-manno-heptose 7-phosphate biosynthetic process"/>
    <property type="evidence" value="ECO:0007669"/>
    <property type="project" value="UniProtKB-UniPathway"/>
</dbReference>
<dbReference type="CDD" id="cd05006">
    <property type="entry name" value="SIS_GmhA"/>
    <property type="match status" value="1"/>
</dbReference>
<dbReference type="Gene3D" id="3.40.50.10490">
    <property type="entry name" value="Glucose-6-phosphate isomerase like protein, domain 1"/>
    <property type="match status" value="1"/>
</dbReference>
<dbReference type="HAMAP" id="MF_00067">
    <property type="entry name" value="GmhA"/>
    <property type="match status" value="1"/>
</dbReference>
<dbReference type="InterPro" id="IPR035461">
    <property type="entry name" value="GmhA/DiaA"/>
</dbReference>
<dbReference type="InterPro" id="IPR004515">
    <property type="entry name" value="Phosphoheptose_Isoase"/>
</dbReference>
<dbReference type="InterPro" id="IPR001347">
    <property type="entry name" value="SIS_dom"/>
</dbReference>
<dbReference type="InterPro" id="IPR046348">
    <property type="entry name" value="SIS_dom_sf"/>
</dbReference>
<dbReference type="InterPro" id="IPR050099">
    <property type="entry name" value="SIS_GmhA/DiaA_subfam"/>
</dbReference>
<dbReference type="PANTHER" id="PTHR30390">
    <property type="entry name" value="SEDOHEPTULOSE 7-PHOSPHATE ISOMERASE / DNAA INITIATOR-ASSOCIATING FACTOR FOR REPLICATION INITIATION"/>
    <property type="match status" value="1"/>
</dbReference>
<dbReference type="Pfam" id="PF13580">
    <property type="entry name" value="SIS_2"/>
    <property type="match status" value="1"/>
</dbReference>
<dbReference type="SUPFAM" id="SSF53697">
    <property type="entry name" value="SIS domain"/>
    <property type="match status" value="1"/>
</dbReference>
<dbReference type="PROSITE" id="PS51464">
    <property type="entry name" value="SIS"/>
    <property type="match status" value="1"/>
</dbReference>
<gene>
    <name evidence="1" type="primary">gmhA</name>
    <name type="ordered locus">Cpha266_2549</name>
</gene>
<comment type="function">
    <text evidence="1">Catalyzes the isomerization of sedoheptulose 7-phosphate in D-glycero-D-manno-heptose 7-phosphate.</text>
</comment>
<comment type="catalytic activity">
    <reaction evidence="1">
        <text>2 D-sedoheptulose 7-phosphate = D-glycero-alpha-D-manno-heptose 7-phosphate + D-glycero-beta-D-manno-heptose 7-phosphate</text>
        <dbReference type="Rhea" id="RHEA:27489"/>
        <dbReference type="ChEBI" id="CHEBI:57483"/>
        <dbReference type="ChEBI" id="CHEBI:60203"/>
        <dbReference type="ChEBI" id="CHEBI:60204"/>
        <dbReference type="EC" id="5.3.1.28"/>
    </reaction>
</comment>
<comment type="cofactor">
    <cofactor evidence="1">
        <name>Zn(2+)</name>
        <dbReference type="ChEBI" id="CHEBI:29105"/>
    </cofactor>
    <text evidence="1">Binds 1 zinc ion per subunit.</text>
</comment>
<comment type="pathway">
    <text evidence="1">Carbohydrate biosynthesis; D-glycero-D-manno-heptose 7-phosphate biosynthesis; D-glycero-alpha-D-manno-heptose 7-phosphate and D-glycero-beta-D-manno-heptose 7-phosphate from sedoheptulose 7-phosphate: step 1/1.</text>
</comment>
<comment type="subcellular location">
    <subcellularLocation>
        <location evidence="1">Cytoplasm</location>
    </subcellularLocation>
</comment>
<comment type="miscellaneous">
    <text evidence="1">The reaction produces a racemic mixture of D-glycero-alpha-D-manno-heptose 7-phosphate and D-glycero-beta-D-manno-heptose 7-phosphate.</text>
</comment>
<comment type="similarity">
    <text evidence="1">Belongs to the SIS family. GmhA subfamily.</text>
</comment>
<accession>A1BJG0</accession>